<organism>
    <name type="scientific">Phenylobacterium zucineum (strain HLK1)</name>
    <dbReference type="NCBI Taxonomy" id="450851"/>
    <lineage>
        <taxon>Bacteria</taxon>
        <taxon>Pseudomonadati</taxon>
        <taxon>Pseudomonadota</taxon>
        <taxon>Alphaproteobacteria</taxon>
        <taxon>Caulobacterales</taxon>
        <taxon>Caulobacteraceae</taxon>
        <taxon>Phenylobacterium</taxon>
    </lineage>
</organism>
<comment type="function">
    <text evidence="1">Cell wall formation. Catalyzes the addition of glutamate to the nucleotide precursor UDP-N-acetylmuramoyl-L-alanine (UMA).</text>
</comment>
<comment type="catalytic activity">
    <reaction evidence="1">
        <text>UDP-N-acetyl-alpha-D-muramoyl-L-alanine + D-glutamate + ATP = UDP-N-acetyl-alpha-D-muramoyl-L-alanyl-D-glutamate + ADP + phosphate + H(+)</text>
        <dbReference type="Rhea" id="RHEA:16429"/>
        <dbReference type="ChEBI" id="CHEBI:15378"/>
        <dbReference type="ChEBI" id="CHEBI:29986"/>
        <dbReference type="ChEBI" id="CHEBI:30616"/>
        <dbReference type="ChEBI" id="CHEBI:43474"/>
        <dbReference type="ChEBI" id="CHEBI:83898"/>
        <dbReference type="ChEBI" id="CHEBI:83900"/>
        <dbReference type="ChEBI" id="CHEBI:456216"/>
        <dbReference type="EC" id="6.3.2.9"/>
    </reaction>
</comment>
<comment type="pathway">
    <text evidence="1">Cell wall biogenesis; peptidoglycan biosynthesis.</text>
</comment>
<comment type="subcellular location">
    <subcellularLocation>
        <location evidence="1">Cytoplasm</location>
    </subcellularLocation>
</comment>
<comment type="similarity">
    <text evidence="1">Belongs to the MurCDEF family.</text>
</comment>
<gene>
    <name evidence="1" type="primary">murD</name>
    <name type="ordered locus">PHZ_c2325</name>
</gene>
<dbReference type="EC" id="6.3.2.9" evidence="1"/>
<dbReference type="EMBL" id="CP000747">
    <property type="protein sequence ID" value="ACG78735.1"/>
    <property type="molecule type" value="Genomic_DNA"/>
</dbReference>
<dbReference type="RefSeq" id="WP_012522876.1">
    <property type="nucleotide sequence ID" value="NC_011144.1"/>
</dbReference>
<dbReference type="SMR" id="B4RFS2"/>
<dbReference type="STRING" id="450851.PHZ_c2325"/>
<dbReference type="KEGG" id="pzu:PHZ_c2325"/>
<dbReference type="eggNOG" id="COG0771">
    <property type="taxonomic scope" value="Bacteria"/>
</dbReference>
<dbReference type="HOGENOM" id="CLU_032540_3_0_5"/>
<dbReference type="OrthoDB" id="9809796at2"/>
<dbReference type="UniPathway" id="UPA00219"/>
<dbReference type="Proteomes" id="UP000001868">
    <property type="component" value="Chromosome"/>
</dbReference>
<dbReference type="GO" id="GO:0005737">
    <property type="term" value="C:cytoplasm"/>
    <property type="evidence" value="ECO:0007669"/>
    <property type="project" value="UniProtKB-SubCell"/>
</dbReference>
<dbReference type="GO" id="GO:0005524">
    <property type="term" value="F:ATP binding"/>
    <property type="evidence" value="ECO:0007669"/>
    <property type="project" value="UniProtKB-UniRule"/>
</dbReference>
<dbReference type="GO" id="GO:0008764">
    <property type="term" value="F:UDP-N-acetylmuramoylalanine-D-glutamate ligase activity"/>
    <property type="evidence" value="ECO:0007669"/>
    <property type="project" value="UniProtKB-UniRule"/>
</dbReference>
<dbReference type="GO" id="GO:0051301">
    <property type="term" value="P:cell division"/>
    <property type="evidence" value="ECO:0007669"/>
    <property type="project" value="UniProtKB-KW"/>
</dbReference>
<dbReference type="GO" id="GO:0071555">
    <property type="term" value="P:cell wall organization"/>
    <property type="evidence" value="ECO:0007669"/>
    <property type="project" value="UniProtKB-KW"/>
</dbReference>
<dbReference type="GO" id="GO:0009252">
    <property type="term" value="P:peptidoglycan biosynthetic process"/>
    <property type="evidence" value="ECO:0007669"/>
    <property type="project" value="UniProtKB-UniRule"/>
</dbReference>
<dbReference type="GO" id="GO:0008360">
    <property type="term" value="P:regulation of cell shape"/>
    <property type="evidence" value="ECO:0007669"/>
    <property type="project" value="UniProtKB-KW"/>
</dbReference>
<dbReference type="Gene3D" id="3.90.190.20">
    <property type="entry name" value="Mur ligase, C-terminal domain"/>
    <property type="match status" value="1"/>
</dbReference>
<dbReference type="Gene3D" id="3.40.1190.10">
    <property type="entry name" value="Mur-like, catalytic domain"/>
    <property type="match status" value="1"/>
</dbReference>
<dbReference type="Gene3D" id="3.40.50.720">
    <property type="entry name" value="NAD(P)-binding Rossmann-like Domain"/>
    <property type="match status" value="1"/>
</dbReference>
<dbReference type="HAMAP" id="MF_00639">
    <property type="entry name" value="MurD"/>
    <property type="match status" value="1"/>
</dbReference>
<dbReference type="InterPro" id="IPR036565">
    <property type="entry name" value="Mur-like_cat_sf"/>
</dbReference>
<dbReference type="InterPro" id="IPR004101">
    <property type="entry name" value="Mur_ligase_C"/>
</dbReference>
<dbReference type="InterPro" id="IPR036615">
    <property type="entry name" value="Mur_ligase_C_dom_sf"/>
</dbReference>
<dbReference type="InterPro" id="IPR013221">
    <property type="entry name" value="Mur_ligase_cen"/>
</dbReference>
<dbReference type="InterPro" id="IPR005762">
    <property type="entry name" value="MurD"/>
</dbReference>
<dbReference type="NCBIfam" id="TIGR01087">
    <property type="entry name" value="murD"/>
    <property type="match status" value="1"/>
</dbReference>
<dbReference type="PANTHER" id="PTHR43692">
    <property type="entry name" value="UDP-N-ACETYLMURAMOYLALANINE--D-GLUTAMATE LIGASE"/>
    <property type="match status" value="1"/>
</dbReference>
<dbReference type="PANTHER" id="PTHR43692:SF1">
    <property type="entry name" value="UDP-N-ACETYLMURAMOYLALANINE--D-GLUTAMATE LIGASE"/>
    <property type="match status" value="1"/>
</dbReference>
<dbReference type="Pfam" id="PF02875">
    <property type="entry name" value="Mur_ligase_C"/>
    <property type="match status" value="1"/>
</dbReference>
<dbReference type="Pfam" id="PF08245">
    <property type="entry name" value="Mur_ligase_M"/>
    <property type="match status" value="1"/>
</dbReference>
<dbReference type="SUPFAM" id="SSF51984">
    <property type="entry name" value="MurCD N-terminal domain"/>
    <property type="match status" value="1"/>
</dbReference>
<dbReference type="SUPFAM" id="SSF53623">
    <property type="entry name" value="MurD-like peptide ligases, catalytic domain"/>
    <property type="match status" value="1"/>
</dbReference>
<dbReference type="SUPFAM" id="SSF53244">
    <property type="entry name" value="MurD-like peptide ligases, peptide-binding domain"/>
    <property type="match status" value="1"/>
</dbReference>
<evidence type="ECO:0000255" key="1">
    <source>
        <dbReference type="HAMAP-Rule" id="MF_00639"/>
    </source>
</evidence>
<reference key="1">
    <citation type="journal article" date="2008" name="BMC Genomics">
        <title>Complete genome of Phenylobacterium zucineum - a novel facultative intracellular bacterium isolated from human erythroleukemia cell line K562.</title>
        <authorList>
            <person name="Luo Y."/>
            <person name="Xu X."/>
            <person name="Ding Z."/>
            <person name="Liu Z."/>
            <person name="Zhang B."/>
            <person name="Yan Z."/>
            <person name="Sun J."/>
            <person name="Hu S."/>
            <person name="Hu X."/>
        </authorList>
    </citation>
    <scope>NUCLEOTIDE SEQUENCE [LARGE SCALE GENOMIC DNA]</scope>
    <source>
        <strain>HLK1</strain>
    </source>
</reference>
<protein>
    <recommendedName>
        <fullName evidence="1">UDP-N-acetylmuramoylalanine--D-glutamate ligase</fullName>
        <ecNumber evidence="1">6.3.2.9</ecNumber>
    </recommendedName>
    <alternativeName>
        <fullName evidence="1">D-glutamic acid-adding enzyme</fullName>
    </alternativeName>
    <alternativeName>
        <fullName evidence="1">UDP-N-acetylmuramoyl-L-alanyl-D-glutamate synthetase</fullName>
    </alternativeName>
</protein>
<feature type="chain" id="PRO_1000130871" description="UDP-N-acetylmuramoylalanine--D-glutamate ligase">
    <location>
        <begin position="1"/>
        <end position="469"/>
    </location>
</feature>
<feature type="binding site" evidence="1">
    <location>
        <begin position="123"/>
        <end position="129"/>
    </location>
    <ligand>
        <name>ATP</name>
        <dbReference type="ChEBI" id="CHEBI:30616"/>
    </ligand>
</feature>
<name>MURD_PHEZH</name>
<proteinExistence type="inferred from homology"/>
<keyword id="KW-0067">ATP-binding</keyword>
<keyword id="KW-0131">Cell cycle</keyword>
<keyword id="KW-0132">Cell division</keyword>
<keyword id="KW-0133">Cell shape</keyword>
<keyword id="KW-0961">Cell wall biogenesis/degradation</keyword>
<keyword id="KW-0963">Cytoplasm</keyword>
<keyword id="KW-0436">Ligase</keyword>
<keyword id="KW-0547">Nucleotide-binding</keyword>
<keyword id="KW-0573">Peptidoglycan synthesis</keyword>
<keyword id="KW-1185">Reference proteome</keyword>
<sequence length="469" mass="49617">MIPVSGFEGRTVAVFGLARTGLAAARALVAGGAKVALWDDKPAAREAAQAEGFELTDLTRADWREFAAVMLSPGVPLTHPAPHWTVERAREAGAEIVGDIELFARTVNAAPEHKRPKIVAITGTNGKSTTTALIGHICAEAGRDVRIGGNIGYGVLGLEDMHGGAVYVLELSSYQLDLTSSLHADVTVILNISPDHLERHGTMDEYVAAKRRILLNQGKGDTAVIGVDDPWGQRICTEITAANRRTIVPVSASKAMSRGVYALDGLLYDATGERAQEVADLKRARSLPGRHNWQNAAAAYAAARGLGISGEEAAQHLMTFPGLAHRMETVAVLGKVRFVNDSKATNADAARQAMSSYPKFYWIAGGLPKTGGIDGLIDLFPRIEKAYLVGEAAPAFADVLRGKAPAVESGTIEAAVRQAYADARAAGQEAIVLLSPACASFDQFADFEERGEAFRAAVQKLADGQADAA</sequence>
<accession>B4RFS2</accession>